<reference key="1">
    <citation type="journal article" date="2004" name="Nat. Genet.">
        <title>Complete sequencing and characterization of 21,243 full-length human cDNAs.</title>
        <authorList>
            <person name="Ota T."/>
            <person name="Suzuki Y."/>
            <person name="Nishikawa T."/>
            <person name="Otsuki T."/>
            <person name="Sugiyama T."/>
            <person name="Irie R."/>
            <person name="Wakamatsu A."/>
            <person name="Hayashi K."/>
            <person name="Sato H."/>
            <person name="Nagai K."/>
            <person name="Kimura K."/>
            <person name="Makita H."/>
            <person name="Sekine M."/>
            <person name="Obayashi M."/>
            <person name="Nishi T."/>
            <person name="Shibahara T."/>
            <person name="Tanaka T."/>
            <person name="Ishii S."/>
            <person name="Yamamoto J."/>
            <person name="Saito K."/>
            <person name="Kawai Y."/>
            <person name="Isono Y."/>
            <person name="Nakamura Y."/>
            <person name="Nagahari K."/>
            <person name="Murakami K."/>
            <person name="Yasuda T."/>
            <person name="Iwayanagi T."/>
            <person name="Wagatsuma M."/>
            <person name="Shiratori A."/>
            <person name="Sudo H."/>
            <person name="Hosoiri T."/>
            <person name="Kaku Y."/>
            <person name="Kodaira H."/>
            <person name="Kondo H."/>
            <person name="Sugawara M."/>
            <person name="Takahashi M."/>
            <person name="Kanda K."/>
            <person name="Yokoi T."/>
            <person name="Furuya T."/>
            <person name="Kikkawa E."/>
            <person name="Omura Y."/>
            <person name="Abe K."/>
            <person name="Kamihara K."/>
            <person name="Katsuta N."/>
            <person name="Sato K."/>
            <person name="Tanikawa M."/>
            <person name="Yamazaki M."/>
            <person name="Ninomiya K."/>
            <person name="Ishibashi T."/>
            <person name="Yamashita H."/>
            <person name="Murakawa K."/>
            <person name="Fujimori K."/>
            <person name="Tanai H."/>
            <person name="Kimata M."/>
            <person name="Watanabe M."/>
            <person name="Hiraoka S."/>
            <person name="Chiba Y."/>
            <person name="Ishida S."/>
            <person name="Ono Y."/>
            <person name="Takiguchi S."/>
            <person name="Watanabe S."/>
            <person name="Yosida M."/>
            <person name="Hotuta T."/>
            <person name="Kusano J."/>
            <person name="Kanehori K."/>
            <person name="Takahashi-Fujii A."/>
            <person name="Hara H."/>
            <person name="Tanase T.-O."/>
            <person name="Nomura Y."/>
            <person name="Togiya S."/>
            <person name="Komai F."/>
            <person name="Hara R."/>
            <person name="Takeuchi K."/>
            <person name="Arita M."/>
            <person name="Imose N."/>
            <person name="Musashino K."/>
            <person name="Yuuki H."/>
            <person name="Oshima A."/>
            <person name="Sasaki N."/>
            <person name="Aotsuka S."/>
            <person name="Yoshikawa Y."/>
            <person name="Matsunawa H."/>
            <person name="Ichihara T."/>
            <person name="Shiohata N."/>
            <person name="Sano S."/>
            <person name="Moriya S."/>
            <person name="Momiyama H."/>
            <person name="Satoh N."/>
            <person name="Takami S."/>
            <person name="Terashima Y."/>
            <person name="Suzuki O."/>
            <person name="Nakagawa S."/>
            <person name="Senoh A."/>
            <person name="Mizoguchi H."/>
            <person name="Goto Y."/>
            <person name="Shimizu F."/>
            <person name="Wakebe H."/>
            <person name="Hishigaki H."/>
            <person name="Watanabe T."/>
            <person name="Sugiyama A."/>
            <person name="Takemoto M."/>
            <person name="Kawakami B."/>
            <person name="Yamazaki M."/>
            <person name="Watanabe K."/>
            <person name="Kumagai A."/>
            <person name="Itakura S."/>
            <person name="Fukuzumi Y."/>
            <person name="Fujimori Y."/>
            <person name="Komiyama M."/>
            <person name="Tashiro H."/>
            <person name="Tanigami A."/>
            <person name="Fujiwara T."/>
            <person name="Ono T."/>
            <person name="Yamada K."/>
            <person name="Fujii Y."/>
            <person name="Ozaki K."/>
            <person name="Hirao M."/>
            <person name="Ohmori Y."/>
            <person name="Kawabata A."/>
            <person name="Hikiji T."/>
            <person name="Kobatake N."/>
            <person name="Inagaki H."/>
            <person name="Ikema Y."/>
            <person name="Okamoto S."/>
            <person name="Okitani R."/>
            <person name="Kawakami T."/>
            <person name="Noguchi S."/>
            <person name="Itoh T."/>
            <person name="Shigeta K."/>
            <person name="Senba T."/>
            <person name="Matsumura K."/>
            <person name="Nakajima Y."/>
            <person name="Mizuno T."/>
            <person name="Morinaga M."/>
            <person name="Sasaki M."/>
            <person name="Togashi T."/>
            <person name="Oyama M."/>
            <person name="Hata H."/>
            <person name="Watanabe M."/>
            <person name="Komatsu T."/>
            <person name="Mizushima-Sugano J."/>
            <person name="Satoh T."/>
            <person name="Shirai Y."/>
            <person name="Takahashi Y."/>
            <person name="Nakagawa K."/>
            <person name="Okumura K."/>
            <person name="Nagase T."/>
            <person name="Nomura N."/>
            <person name="Kikuchi H."/>
            <person name="Masuho Y."/>
            <person name="Yamashita R."/>
            <person name="Nakai K."/>
            <person name="Yada T."/>
            <person name="Nakamura Y."/>
            <person name="Ohara O."/>
            <person name="Isogai T."/>
            <person name="Sugano S."/>
        </authorList>
    </citation>
    <scope>NUCLEOTIDE SEQUENCE [LARGE SCALE MRNA] (ISOFORM 2)</scope>
    <source>
        <tissue>Testis</tissue>
    </source>
</reference>
<reference key="2">
    <citation type="journal article" date="2006" name="Nature">
        <title>The DNA sequence and biological annotation of human chromosome 1.</title>
        <authorList>
            <person name="Gregory S.G."/>
            <person name="Barlow K.F."/>
            <person name="McLay K.E."/>
            <person name="Kaul R."/>
            <person name="Swarbreck D."/>
            <person name="Dunham A."/>
            <person name="Scott C.E."/>
            <person name="Howe K.L."/>
            <person name="Woodfine K."/>
            <person name="Spencer C.C.A."/>
            <person name="Jones M.C."/>
            <person name="Gillson C."/>
            <person name="Searle S."/>
            <person name="Zhou Y."/>
            <person name="Kokocinski F."/>
            <person name="McDonald L."/>
            <person name="Evans R."/>
            <person name="Phillips K."/>
            <person name="Atkinson A."/>
            <person name="Cooper R."/>
            <person name="Jones C."/>
            <person name="Hall R.E."/>
            <person name="Andrews T.D."/>
            <person name="Lloyd C."/>
            <person name="Ainscough R."/>
            <person name="Almeida J.P."/>
            <person name="Ambrose K.D."/>
            <person name="Anderson F."/>
            <person name="Andrew R.W."/>
            <person name="Ashwell R.I.S."/>
            <person name="Aubin K."/>
            <person name="Babbage A.K."/>
            <person name="Bagguley C.L."/>
            <person name="Bailey J."/>
            <person name="Beasley H."/>
            <person name="Bethel G."/>
            <person name="Bird C.P."/>
            <person name="Bray-Allen S."/>
            <person name="Brown J.Y."/>
            <person name="Brown A.J."/>
            <person name="Buckley D."/>
            <person name="Burton J."/>
            <person name="Bye J."/>
            <person name="Carder C."/>
            <person name="Chapman J.C."/>
            <person name="Clark S.Y."/>
            <person name="Clarke G."/>
            <person name="Clee C."/>
            <person name="Cobley V."/>
            <person name="Collier R.E."/>
            <person name="Corby N."/>
            <person name="Coville G.J."/>
            <person name="Davies J."/>
            <person name="Deadman R."/>
            <person name="Dunn M."/>
            <person name="Earthrowl M."/>
            <person name="Ellington A.G."/>
            <person name="Errington H."/>
            <person name="Frankish A."/>
            <person name="Frankland J."/>
            <person name="French L."/>
            <person name="Garner P."/>
            <person name="Garnett J."/>
            <person name="Gay L."/>
            <person name="Ghori M.R.J."/>
            <person name="Gibson R."/>
            <person name="Gilby L.M."/>
            <person name="Gillett W."/>
            <person name="Glithero R.J."/>
            <person name="Grafham D.V."/>
            <person name="Griffiths C."/>
            <person name="Griffiths-Jones S."/>
            <person name="Grocock R."/>
            <person name="Hammond S."/>
            <person name="Harrison E.S.I."/>
            <person name="Hart E."/>
            <person name="Haugen E."/>
            <person name="Heath P.D."/>
            <person name="Holmes S."/>
            <person name="Holt K."/>
            <person name="Howden P.J."/>
            <person name="Hunt A.R."/>
            <person name="Hunt S.E."/>
            <person name="Hunter G."/>
            <person name="Isherwood J."/>
            <person name="James R."/>
            <person name="Johnson C."/>
            <person name="Johnson D."/>
            <person name="Joy A."/>
            <person name="Kay M."/>
            <person name="Kershaw J.K."/>
            <person name="Kibukawa M."/>
            <person name="Kimberley A.M."/>
            <person name="King A."/>
            <person name="Knights A.J."/>
            <person name="Lad H."/>
            <person name="Laird G."/>
            <person name="Lawlor S."/>
            <person name="Leongamornlert D.A."/>
            <person name="Lloyd D.M."/>
            <person name="Loveland J."/>
            <person name="Lovell J."/>
            <person name="Lush M.J."/>
            <person name="Lyne R."/>
            <person name="Martin S."/>
            <person name="Mashreghi-Mohammadi M."/>
            <person name="Matthews L."/>
            <person name="Matthews N.S.W."/>
            <person name="McLaren S."/>
            <person name="Milne S."/>
            <person name="Mistry S."/>
            <person name="Moore M.J.F."/>
            <person name="Nickerson T."/>
            <person name="O'Dell C.N."/>
            <person name="Oliver K."/>
            <person name="Palmeiri A."/>
            <person name="Palmer S.A."/>
            <person name="Parker A."/>
            <person name="Patel D."/>
            <person name="Pearce A.V."/>
            <person name="Peck A.I."/>
            <person name="Pelan S."/>
            <person name="Phelps K."/>
            <person name="Phillimore B.J."/>
            <person name="Plumb R."/>
            <person name="Rajan J."/>
            <person name="Raymond C."/>
            <person name="Rouse G."/>
            <person name="Saenphimmachak C."/>
            <person name="Sehra H.K."/>
            <person name="Sheridan E."/>
            <person name="Shownkeen R."/>
            <person name="Sims S."/>
            <person name="Skuce C.D."/>
            <person name="Smith M."/>
            <person name="Steward C."/>
            <person name="Subramanian S."/>
            <person name="Sycamore N."/>
            <person name="Tracey A."/>
            <person name="Tromans A."/>
            <person name="Van Helmond Z."/>
            <person name="Wall M."/>
            <person name="Wallis J.M."/>
            <person name="White S."/>
            <person name="Whitehead S.L."/>
            <person name="Wilkinson J.E."/>
            <person name="Willey D.L."/>
            <person name="Williams H."/>
            <person name="Wilming L."/>
            <person name="Wray P.W."/>
            <person name="Wu Z."/>
            <person name="Coulson A."/>
            <person name="Vaudin M."/>
            <person name="Sulston J.E."/>
            <person name="Durbin R.M."/>
            <person name="Hubbard T."/>
            <person name="Wooster R."/>
            <person name="Dunham I."/>
            <person name="Carter N.P."/>
            <person name="McVean G."/>
            <person name="Ross M.T."/>
            <person name="Harrow J."/>
            <person name="Olson M.V."/>
            <person name="Beck S."/>
            <person name="Rogers J."/>
            <person name="Bentley D.R."/>
        </authorList>
    </citation>
    <scope>NUCLEOTIDE SEQUENCE [LARGE SCALE GENOMIC DNA]</scope>
</reference>
<reference key="3">
    <citation type="submission" date="2005-09" db="EMBL/GenBank/DDBJ databases">
        <authorList>
            <person name="Mural R.J."/>
            <person name="Istrail S."/>
            <person name="Sutton G.G."/>
            <person name="Florea L."/>
            <person name="Halpern A.L."/>
            <person name="Mobarry C.M."/>
            <person name="Lippert R."/>
            <person name="Walenz B."/>
            <person name="Shatkay H."/>
            <person name="Dew I."/>
            <person name="Miller J.R."/>
            <person name="Flanigan M.J."/>
            <person name="Edwards N.J."/>
            <person name="Bolanos R."/>
            <person name="Fasulo D."/>
            <person name="Halldorsson B.V."/>
            <person name="Hannenhalli S."/>
            <person name="Turner R."/>
            <person name="Yooseph S."/>
            <person name="Lu F."/>
            <person name="Nusskern D.R."/>
            <person name="Shue B.C."/>
            <person name="Zheng X.H."/>
            <person name="Zhong F."/>
            <person name="Delcher A.L."/>
            <person name="Huson D.H."/>
            <person name="Kravitz S.A."/>
            <person name="Mouchard L."/>
            <person name="Reinert K."/>
            <person name="Remington K.A."/>
            <person name="Clark A.G."/>
            <person name="Waterman M.S."/>
            <person name="Eichler E.E."/>
            <person name="Adams M.D."/>
            <person name="Hunkapiller M.W."/>
            <person name="Myers E.W."/>
            <person name="Venter J.C."/>
        </authorList>
    </citation>
    <scope>NUCLEOTIDE SEQUENCE [LARGE SCALE GENOMIC DNA]</scope>
</reference>
<reference key="4">
    <citation type="journal article" date="2004" name="Genome Res.">
        <title>The status, quality, and expansion of the NIH full-length cDNA project: the Mammalian Gene Collection (MGC).</title>
        <authorList>
            <consortium name="The MGC Project Team"/>
        </authorList>
    </citation>
    <scope>NUCLEOTIDE SEQUENCE [LARGE SCALE MRNA] (ISOFORM 3)</scope>
    <scope>NUCLEOTIDE SEQUENCE [LARGE SCALE MRNA] OF 361-624 (ISOFORM 1)</scope>
    <source>
        <tissue>Testis</tissue>
    </source>
</reference>
<evidence type="ECO:0000255" key="1"/>
<evidence type="ECO:0000255" key="2">
    <source>
        <dbReference type="PROSITE-ProRule" id="PRU00116"/>
    </source>
</evidence>
<evidence type="ECO:0000303" key="3">
    <source>
    </source>
</evidence>
<evidence type="ECO:0000303" key="4">
    <source>
    </source>
</evidence>
<evidence type="ECO:0000305" key="5"/>
<keyword id="KW-0025">Alternative splicing</keyword>
<keyword id="KW-0175">Coiled coil</keyword>
<keyword id="KW-0433">Leucine-rich repeat</keyword>
<keyword id="KW-1267">Proteomics identification</keyword>
<keyword id="KW-1185">Reference proteome</keyword>
<keyword id="KW-0677">Repeat</keyword>
<accession>A6PVS8</accession>
<accession>A6PVS9</accession>
<accession>Q6P5P7</accession>
<accession>Q6ZMV4</accession>
<accession>Q8WUE0</accession>
<gene>
    <name type="primary">LRRIQ3</name>
    <name type="synonym">LRRC44</name>
</gene>
<name>LRIQ3_HUMAN</name>
<organism>
    <name type="scientific">Homo sapiens</name>
    <name type="common">Human</name>
    <dbReference type="NCBI Taxonomy" id="9606"/>
    <lineage>
        <taxon>Eukaryota</taxon>
        <taxon>Metazoa</taxon>
        <taxon>Chordata</taxon>
        <taxon>Craniata</taxon>
        <taxon>Vertebrata</taxon>
        <taxon>Euteleostomi</taxon>
        <taxon>Mammalia</taxon>
        <taxon>Eutheria</taxon>
        <taxon>Euarchontoglires</taxon>
        <taxon>Primates</taxon>
        <taxon>Haplorrhini</taxon>
        <taxon>Catarrhini</taxon>
        <taxon>Hominidae</taxon>
        <taxon>Homo</taxon>
    </lineage>
</organism>
<comment type="interaction">
    <interactant intactId="EBI-10184751">
        <id>A6PVS8</id>
    </interactant>
    <interactant intactId="EBI-713635">
        <id>O43639</id>
        <label>NCK2</label>
    </interactant>
    <organismsDiffer>false</organismsDiffer>
    <experiments>6</experiments>
</comment>
<comment type="alternative products">
    <event type="alternative splicing"/>
    <isoform>
        <id>A6PVS8-1</id>
        <name>1</name>
        <sequence type="displayed"/>
    </isoform>
    <isoform>
        <id>A6PVS8-2</id>
        <name>2</name>
        <sequence type="described" ref="VSP_029410 VSP_029411"/>
    </isoform>
    <isoform>
        <id>A6PVS8-3</id>
        <name>3</name>
        <sequence type="described" ref="VSP_029408 VSP_029409"/>
    </isoform>
</comment>
<comment type="sequence caution" evidence="5">
    <conflict type="erroneous initiation">
        <sequence resource="EMBL-CDS" id="AAH62795"/>
    </conflict>
</comment>
<comment type="sequence caution" evidence="5">
    <molecule>Isoform 2</molecule>
    <conflict type="frameshift">
        <sequence resource="EMBL-CDS" id="BAD18621"/>
    </conflict>
</comment>
<sequence length="624" mass="73675">MFHGTVTEELTSHEEWSHYNENIREGQKDFVFVKFNGLHLKSMENLQSCISLRVCIFSNNFITDIHPLQSCIKLIKLDLHGNQIKSLPNTKFWNGLKNLKLLYLHDNGFAKLKNICVLSACPTLIALTMFDCPVSLKKGYRHVLVNSIWPLKALDHHVISDEEIIQNWHLPERFKACNHRLFFNFCPALRKGTTYEEEINNIKHITSKINAILAHNSPVLIVQRWIRGFLVRKNLSPVFFHKKKQQEKIIRGYEAKWIYITKGYEDKLLKDLFFKPETNIKGKLAYWKHNIYYPVDLKNSSEHRKHVSSILCELKPKDLGMKSKTSRHLIQKGQESEDEIVDEKLDTSFRISVFKLPIYTSGSLKNNAVLREKKQHFFPAYPQPIYTTHPKPIIKKDIRLERSMKEFFAPQRAGMKLRTFSDIDKYYTEQKKQEYHKEKVRVVAMAQVARERVRVAVNEHLNQKKYATQKLIEENKETIQNSLRQVWQNRFNYLEKARERKALFLKEKSQKASERLLVQNLNNERTLLTRGLLKIDRLEKNEAVLKEKSLIVKQKLKAEKYRKNLLKEMKKVRSQEIYKRHCEEKFVMDMIAFEKACERLQDAKTKVAIVKTNLDFKVPNGLIK</sequence>
<feature type="chain" id="PRO_0000311194" description="Leucine-rich repeat and IQ domain-containing protein 3">
    <location>
        <begin position="1"/>
        <end position="624"/>
    </location>
</feature>
<feature type="repeat" description="LRR 1">
    <location>
        <begin position="51"/>
        <end position="72"/>
    </location>
</feature>
<feature type="repeat" description="LRR 2">
    <location>
        <begin position="73"/>
        <end position="94"/>
    </location>
</feature>
<feature type="repeat" description="LRR 3">
    <location>
        <begin position="98"/>
        <end position="119"/>
    </location>
</feature>
<feature type="domain" description="LRRCT">
    <location>
        <begin position="132"/>
        <end position="179"/>
    </location>
</feature>
<feature type="domain" description="IQ" evidence="2">
    <location>
        <begin position="215"/>
        <end position="244"/>
    </location>
</feature>
<feature type="coiled-coil region" evidence="1">
    <location>
        <begin position="553"/>
        <end position="614"/>
    </location>
</feature>
<feature type="splice variant" id="VSP_029408" description="In isoform 3." evidence="4">
    <original>GTTYEEEI</original>
    <variation>EKMKHSEV</variation>
    <location>
        <begin position="192"/>
        <end position="199"/>
    </location>
</feature>
<feature type="splice variant" id="VSP_029409" description="In isoform 3." evidence="4">
    <location>
        <begin position="200"/>
        <end position="624"/>
    </location>
</feature>
<feature type="splice variant" id="VSP_029410" description="In isoform 2." evidence="3">
    <original>NIYYPVDLKN</original>
    <variation>DKKKLWVNFH</variation>
    <location>
        <begin position="290"/>
        <end position="299"/>
    </location>
</feature>
<feature type="splice variant" id="VSP_029411" description="In isoform 2." evidence="3">
    <location>
        <begin position="300"/>
        <end position="624"/>
    </location>
</feature>
<feature type="sequence variant" id="VAR_037154" description="In dbSNP:rs2274904.">
    <original>F</original>
    <variation>C</variation>
    <location>
        <position position="35"/>
    </location>
</feature>
<feature type="sequence variant" id="VAR_037155" description="In dbSNP:rs17094900.">
    <original>M</original>
    <variation>I</variation>
    <location>
        <position position="129"/>
    </location>
</feature>
<feature type="sequence variant" id="VAR_037156" description="In dbSNP:rs17591320.">
    <original>H</original>
    <variation>Y</variation>
    <location>
        <position position="156"/>
    </location>
</feature>
<feature type="sequence variant" id="VAR_051136" description="In dbSNP:rs1340472.">
    <original>A</original>
    <variation>T</variation>
    <location>
        <position position="255"/>
    </location>
</feature>
<feature type="sequence variant" id="VAR_051137" description="In dbSNP:rs17094779.">
    <original>I</original>
    <variation>V</variation>
    <location>
        <position position="398"/>
    </location>
</feature>
<feature type="sequence variant" id="VAR_051138" description="In dbSNP:rs17094777.">
    <original>E</original>
    <variation>K</variation>
    <location>
        <position position="434"/>
    </location>
</feature>
<feature type="sequence variant" id="VAR_051139" description="In dbSNP:rs17094774.">
    <original>L</original>
    <variation>F</variation>
    <location>
        <position position="483"/>
    </location>
</feature>
<feature type="sequence conflict" description="In Ref. 1; BAD18621." evidence="5" ref="1">
    <original>QQEKII</original>
    <variation>TAGKNY</variation>
    <location>
        <begin position="245"/>
        <end position="250"/>
    </location>
</feature>
<feature type="sequence conflict" description="In Ref. 4; AAH62795." evidence="5" ref="4">
    <original>S</original>
    <variation>G</variation>
    <location>
        <position position="361"/>
    </location>
</feature>
<dbReference type="EMBL" id="AK131476">
    <property type="protein sequence ID" value="BAD18621.1"/>
    <property type="status" value="ALT_FRAME"/>
    <property type="molecule type" value="mRNA"/>
</dbReference>
<dbReference type="EMBL" id="AC098692">
    <property type="status" value="NOT_ANNOTATED_CDS"/>
    <property type="molecule type" value="Genomic_DNA"/>
</dbReference>
<dbReference type="EMBL" id="AL359205">
    <property type="status" value="NOT_ANNOTATED_CDS"/>
    <property type="molecule type" value="Genomic_DNA"/>
</dbReference>
<dbReference type="EMBL" id="CH471059">
    <property type="protein sequence ID" value="EAX06419.1"/>
    <property type="molecule type" value="Genomic_DNA"/>
</dbReference>
<dbReference type="EMBL" id="CH471059">
    <property type="protein sequence ID" value="EAX06423.1"/>
    <property type="molecule type" value="Genomic_DNA"/>
</dbReference>
<dbReference type="EMBL" id="BC020778">
    <property type="protein sequence ID" value="AAH20778.1"/>
    <property type="molecule type" value="mRNA"/>
</dbReference>
<dbReference type="EMBL" id="BC062795">
    <property type="protein sequence ID" value="AAH62795.1"/>
    <property type="status" value="ALT_INIT"/>
    <property type="molecule type" value="mRNA"/>
</dbReference>
<dbReference type="CCDS" id="CCDS41350.1">
    <molecule id="A6PVS8-1"/>
</dbReference>
<dbReference type="RefSeq" id="NP_001099129.1">
    <molecule id="A6PVS8-1"/>
    <property type="nucleotide sequence ID" value="NM_001105659.2"/>
</dbReference>
<dbReference type="RefSeq" id="XP_047301342.1">
    <molecule id="A6PVS8-2"/>
    <property type="nucleotide sequence ID" value="XM_047445386.1"/>
</dbReference>
<dbReference type="SMR" id="A6PVS8"/>
<dbReference type="BioGRID" id="126047">
    <property type="interactions" value="11"/>
</dbReference>
<dbReference type="FunCoup" id="A6PVS8">
    <property type="interactions" value="15"/>
</dbReference>
<dbReference type="IntAct" id="A6PVS8">
    <property type="interactions" value="4"/>
</dbReference>
<dbReference type="STRING" id="9606.ENSP00000346414"/>
<dbReference type="GlyGen" id="A6PVS8">
    <property type="glycosylation" value="2 sites, 1 O-linked glycan (2 sites)"/>
</dbReference>
<dbReference type="iPTMnet" id="A6PVS8"/>
<dbReference type="PhosphoSitePlus" id="A6PVS8"/>
<dbReference type="BioMuta" id="LRRIQ3"/>
<dbReference type="jPOST" id="A6PVS8"/>
<dbReference type="MassIVE" id="A6PVS8"/>
<dbReference type="PaxDb" id="9606-ENSP00000346414"/>
<dbReference type="PeptideAtlas" id="A6PVS8"/>
<dbReference type="ProteomicsDB" id="1706">
    <molecule id="A6PVS8-1"/>
</dbReference>
<dbReference type="ProteomicsDB" id="1707">
    <molecule id="A6PVS8-2"/>
</dbReference>
<dbReference type="ProteomicsDB" id="1708">
    <molecule id="A6PVS8-3"/>
</dbReference>
<dbReference type="Antibodypedia" id="33447">
    <property type="antibodies" value="103 antibodies from 16 providers"/>
</dbReference>
<dbReference type="DNASU" id="127255"/>
<dbReference type="Ensembl" id="ENST00000354431.9">
    <molecule id="A6PVS8-1"/>
    <property type="protein sequence ID" value="ENSP00000346414.4"/>
    <property type="gene ID" value="ENSG00000162620.16"/>
</dbReference>
<dbReference type="Ensembl" id="ENST00000370911.7">
    <molecule id="A6PVS8-3"/>
    <property type="protein sequence ID" value="ENSP00000359948.3"/>
    <property type="gene ID" value="ENSG00000162620.16"/>
</dbReference>
<dbReference type="Ensembl" id="ENST00000395089.5">
    <molecule id="A6PVS8-1"/>
    <property type="protein sequence ID" value="ENSP00000378524.1"/>
    <property type="gene ID" value="ENSG00000162620.16"/>
</dbReference>
<dbReference type="Ensembl" id="ENST00000415760.5">
    <molecule id="A6PVS8-2"/>
    <property type="protein sequence ID" value="ENSP00000415319.1"/>
    <property type="gene ID" value="ENSG00000162620.16"/>
</dbReference>
<dbReference type="GeneID" id="127255"/>
<dbReference type="KEGG" id="hsa:127255"/>
<dbReference type="MANE-Select" id="ENST00000354431.9">
    <property type="protein sequence ID" value="ENSP00000346414.4"/>
    <property type="RefSeq nucleotide sequence ID" value="NM_001105659.2"/>
    <property type="RefSeq protein sequence ID" value="NP_001099129.1"/>
</dbReference>
<dbReference type="UCSC" id="uc001dfy.5">
    <molecule id="A6PVS8-1"/>
    <property type="organism name" value="human"/>
</dbReference>
<dbReference type="AGR" id="HGNC:28318"/>
<dbReference type="CTD" id="127255"/>
<dbReference type="DisGeNET" id="127255"/>
<dbReference type="GeneCards" id="LRRIQ3"/>
<dbReference type="HGNC" id="HGNC:28318">
    <property type="gene designation" value="LRRIQ3"/>
</dbReference>
<dbReference type="HPA" id="ENSG00000162620">
    <property type="expression patterns" value="Tissue enriched (testis)"/>
</dbReference>
<dbReference type="MIM" id="617957">
    <property type="type" value="gene"/>
</dbReference>
<dbReference type="neXtProt" id="NX_A6PVS8"/>
<dbReference type="OpenTargets" id="ENSG00000162620"/>
<dbReference type="PharmGKB" id="PA162394627"/>
<dbReference type="VEuPathDB" id="HostDB:ENSG00000162620"/>
<dbReference type="eggNOG" id="KOG0531">
    <property type="taxonomic scope" value="Eukaryota"/>
</dbReference>
<dbReference type="GeneTree" id="ENSGT00390000004404"/>
<dbReference type="HOGENOM" id="CLU_029934_0_0_1"/>
<dbReference type="InParanoid" id="A6PVS8"/>
<dbReference type="OMA" id="KLPICTS"/>
<dbReference type="OrthoDB" id="676979at2759"/>
<dbReference type="PAN-GO" id="A6PVS8">
    <property type="GO annotations" value="0 GO annotations based on evolutionary models"/>
</dbReference>
<dbReference type="PhylomeDB" id="A6PVS8"/>
<dbReference type="TreeFam" id="TF329557"/>
<dbReference type="PathwayCommons" id="A6PVS8"/>
<dbReference type="SignaLink" id="A6PVS8"/>
<dbReference type="BioGRID-ORCS" id="127255">
    <property type="hits" value="9 hits in 1141 CRISPR screens"/>
</dbReference>
<dbReference type="GenomeRNAi" id="127255"/>
<dbReference type="Pharos" id="A6PVS8">
    <property type="development level" value="Tdark"/>
</dbReference>
<dbReference type="PRO" id="PR:A6PVS8"/>
<dbReference type="Proteomes" id="UP000005640">
    <property type="component" value="Chromosome 1"/>
</dbReference>
<dbReference type="RNAct" id="A6PVS8">
    <property type="molecule type" value="protein"/>
</dbReference>
<dbReference type="Bgee" id="ENSG00000162620">
    <property type="expression patterns" value="Expressed in male germ line stem cell (sensu Vertebrata) in testis and 114 other cell types or tissues"/>
</dbReference>
<dbReference type="ExpressionAtlas" id="A6PVS8">
    <property type="expression patterns" value="baseline and differential"/>
</dbReference>
<dbReference type="Gene3D" id="3.80.10.10">
    <property type="entry name" value="Ribonuclease Inhibitor"/>
    <property type="match status" value="1"/>
</dbReference>
<dbReference type="InterPro" id="IPR001611">
    <property type="entry name" value="Leu-rich_rpt"/>
</dbReference>
<dbReference type="InterPro" id="IPR052859">
    <property type="entry name" value="LRR-IQ_domain_protein"/>
</dbReference>
<dbReference type="InterPro" id="IPR032675">
    <property type="entry name" value="LRR_dom_sf"/>
</dbReference>
<dbReference type="PANTHER" id="PTHR46723">
    <property type="entry name" value="LEUCINE-RICH REPEAT AND IQ DOMAIN-CONTAINING PROTEIN 3"/>
    <property type="match status" value="1"/>
</dbReference>
<dbReference type="PANTHER" id="PTHR46723:SF1">
    <property type="entry name" value="LEUCINE-RICH REPEAT AND IQ DOMAIN-CONTAINING PROTEIN 3"/>
    <property type="match status" value="1"/>
</dbReference>
<dbReference type="SUPFAM" id="SSF52058">
    <property type="entry name" value="L domain-like"/>
    <property type="match status" value="1"/>
</dbReference>
<dbReference type="PROSITE" id="PS50096">
    <property type="entry name" value="IQ"/>
    <property type="match status" value="1"/>
</dbReference>
<dbReference type="PROSITE" id="PS51450">
    <property type="entry name" value="LRR"/>
    <property type="match status" value="3"/>
</dbReference>
<protein>
    <recommendedName>
        <fullName>Leucine-rich repeat and IQ domain-containing protein 3</fullName>
    </recommendedName>
    <alternativeName>
        <fullName>Leucine-rich repeat-containing protein 44</fullName>
    </alternativeName>
</protein>
<proteinExistence type="evidence at protein level"/>